<evidence type="ECO:0000255" key="1"/>
<evidence type="ECO:0000269" key="2">
    <source>
    </source>
</evidence>
<evidence type="ECO:0000303" key="3">
    <source>
    </source>
</evidence>
<evidence type="ECO:0000305" key="4"/>
<evidence type="ECO:0000305" key="5">
    <source>
    </source>
</evidence>
<protein>
    <recommendedName>
        <fullName evidence="3">High-affinity copper transporter ctrA2</fullName>
    </recommendedName>
    <alternativeName>
        <fullName evidence="3">Copper transport protein A2</fullName>
    </alternativeName>
</protein>
<dbReference type="EMBL" id="AAHF01000012">
    <property type="protein sequence ID" value="EAL85758.1"/>
    <property type="molecule type" value="Genomic_DNA"/>
</dbReference>
<dbReference type="RefSeq" id="XP_747796.1">
    <property type="nucleotide sequence ID" value="XM_742703.1"/>
</dbReference>
<dbReference type="STRING" id="330879.Q4WCY0"/>
<dbReference type="TCDB" id="1.A.56.3.2">
    <property type="family name" value="the copper transporter (ctr) family"/>
</dbReference>
<dbReference type="EnsemblFungi" id="EAL85758">
    <property type="protein sequence ID" value="EAL85758"/>
    <property type="gene ID" value="AFUA_6G02810"/>
</dbReference>
<dbReference type="GeneID" id="3505158"/>
<dbReference type="KEGG" id="afm:AFUA_6G02810"/>
<dbReference type="VEuPathDB" id="FungiDB:Afu6g02810"/>
<dbReference type="eggNOG" id="ENOG502S287">
    <property type="taxonomic scope" value="Eukaryota"/>
</dbReference>
<dbReference type="HOGENOM" id="CLU_090404_1_1_1"/>
<dbReference type="InParanoid" id="Q4WCY0"/>
<dbReference type="OMA" id="PIPWRFS"/>
<dbReference type="OrthoDB" id="73901at2759"/>
<dbReference type="Proteomes" id="UP000002530">
    <property type="component" value="Chromosome 6"/>
</dbReference>
<dbReference type="GO" id="GO:0005886">
    <property type="term" value="C:plasma membrane"/>
    <property type="evidence" value="ECO:0000318"/>
    <property type="project" value="GO_Central"/>
</dbReference>
<dbReference type="GO" id="GO:0005375">
    <property type="term" value="F:copper ion transmembrane transporter activity"/>
    <property type="evidence" value="ECO:0000318"/>
    <property type="project" value="GO_Central"/>
</dbReference>
<dbReference type="InterPro" id="IPR007274">
    <property type="entry name" value="Cop_transporter"/>
</dbReference>
<dbReference type="PANTHER" id="PTHR12483:SF120">
    <property type="entry name" value="HIGH-AFFINITY COPPER TRANSPORTER CTRA2"/>
    <property type="match status" value="1"/>
</dbReference>
<dbReference type="PANTHER" id="PTHR12483">
    <property type="entry name" value="SOLUTE CARRIER FAMILY 31 COPPER TRANSPORTERS"/>
    <property type="match status" value="1"/>
</dbReference>
<dbReference type="Pfam" id="PF04145">
    <property type="entry name" value="Ctr"/>
    <property type="match status" value="1"/>
</dbReference>
<feature type="chain" id="PRO_0000457374" description="High-affinity copper transporter ctrA2">
    <location>
        <begin position="1"/>
        <end position="187"/>
    </location>
</feature>
<feature type="transmembrane region" description="Helical" evidence="1">
    <location>
        <begin position="44"/>
        <end position="64"/>
    </location>
</feature>
<feature type="transmembrane region" description="Helical" evidence="1">
    <location>
        <begin position="137"/>
        <end position="157"/>
    </location>
</feature>
<reference key="1">
    <citation type="journal article" date="2005" name="Nature">
        <title>Genomic sequence of the pathogenic and allergenic filamentous fungus Aspergillus fumigatus.</title>
        <authorList>
            <person name="Nierman W.C."/>
            <person name="Pain A."/>
            <person name="Anderson M.J."/>
            <person name="Wortman J.R."/>
            <person name="Kim H.S."/>
            <person name="Arroyo J."/>
            <person name="Berriman M."/>
            <person name="Abe K."/>
            <person name="Archer D.B."/>
            <person name="Bermejo C."/>
            <person name="Bennett J.W."/>
            <person name="Bowyer P."/>
            <person name="Chen D."/>
            <person name="Collins M."/>
            <person name="Coulsen R."/>
            <person name="Davies R."/>
            <person name="Dyer P.S."/>
            <person name="Farman M.L."/>
            <person name="Fedorova N."/>
            <person name="Fedorova N.D."/>
            <person name="Feldblyum T.V."/>
            <person name="Fischer R."/>
            <person name="Fosker N."/>
            <person name="Fraser A."/>
            <person name="Garcia J.L."/>
            <person name="Garcia M.J."/>
            <person name="Goble A."/>
            <person name="Goldman G.H."/>
            <person name="Gomi K."/>
            <person name="Griffith-Jones S."/>
            <person name="Gwilliam R."/>
            <person name="Haas B.J."/>
            <person name="Haas H."/>
            <person name="Harris D.E."/>
            <person name="Horiuchi H."/>
            <person name="Huang J."/>
            <person name="Humphray S."/>
            <person name="Jimenez J."/>
            <person name="Keller N."/>
            <person name="Khouri H."/>
            <person name="Kitamoto K."/>
            <person name="Kobayashi T."/>
            <person name="Konzack S."/>
            <person name="Kulkarni R."/>
            <person name="Kumagai T."/>
            <person name="Lafton A."/>
            <person name="Latge J.-P."/>
            <person name="Li W."/>
            <person name="Lord A."/>
            <person name="Lu C."/>
            <person name="Majoros W.H."/>
            <person name="May G.S."/>
            <person name="Miller B.L."/>
            <person name="Mohamoud Y."/>
            <person name="Molina M."/>
            <person name="Monod M."/>
            <person name="Mouyna I."/>
            <person name="Mulligan S."/>
            <person name="Murphy L.D."/>
            <person name="O'Neil S."/>
            <person name="Paulsen I."/>
            <person name="Penalva M.A."/>
            <person name="Pertea M."/>
            <person name="Price C."/>
            <person name="Pritchard B.L."/>
            <person name="Quail M.A."/>
            <person name="Rabbinowitsch E."/>
            <person name="Rawlins N."/>
            <person name="Rajandream M.A."/>
            <person name="Reichard U."/>
            <person name="Renauld H."/>
            <person name="Robson G.D."/>
            <person name="Rodriguez de Cordoba S."/>
            <person name="Rodriguez-Pena J.M."/>
            <person name="Ronning C.M."/>
            <person name="Rutter S."/>
            <person name="Salzberg S.L."/>
            <person name="Sanchez M."/>
            <person name="Sanchez-Ferrero J.C."/>
            <person name="Saunders D."/>
            <person name="Seeger K."/>
            <person name="Squares R."/>
            <person name="Squares S."/>
            <person name="Takeuchi M."/>
            <person name="Tekaia F."/>
            <person name="Turner G."/>
            <person name="Vazquez de Aldana C.R."/>
            <person name="Weidman J."/>
            <person name="White O."/>
            <person name="Woodward J.R."/>
            <person name="Yu J.-H."/>
            <person name="Fraser C.M."/>
            <person name="Galagan J.E."/>
            <person name="Asai K."/>
            <person name="Machida M."/>
            <person name="Hall N."/>
            <person name="Barrell B.G."/>
            <person name="Denning D.W."/>
        </authorList>
    </citation>
    <scope>NUCLEOTIDE SEQUENCE [LARGE SCALE GENOMIC DNA]</scope>
    <source>
        <strain>ATCC MYA-4609 / CBS 101355 / FGSC A1100 / Af293</strain>
    </source>
</reference>
<reference key="2">
    <citation type="journal article" date="2014" name="Fungal Genet. Biol.">
        <title>Identification of high-affinity copper transporters in Aspergillus fumigatus.</title>
        <authorList>
            <person name="Park Y.S."/>
            <person name="Lian H."/>
            <person name="Chang M."/>
            <person name="Kang C.M."/>
            <person name="Yun C.W."/>
        </authorList>
    </citation>
    <scope>FUNCTION</scope>
    <scope>TRANSPORT ACTIVITY</scope>
    <scope>SUBCELLULAR LOCATION</scope>
    <scope>DISRUPTION PHENOTYPE</scope>
    <scope>INDUCTION</scope>
</reference>
<sequence>MNMDHSSHSTMSSSSSMTMTMVFTNSHDTPLFSSAWTPSSSGAYAGTCIFLVVLAIINRCLVAFKASMEHYWFATHLNRRYIAIAGKSSEAGRIDTDPDAKVASLVTAQGVEESVKVVRRVSREPIPWRFSVDLPRAAIFLCITGVSYLLMLAVMTMNVGYFCSVLAGAFLGELAVGRYIQWNEHDH</sequence>
<organism>
    <name type="scientific">Aspergillus fumigatus (strain ATCC MYA-4609 / CBS 101355 / FGSC A1100 / Af293)</name>
    <name type="common">Neosartorya fumigata</name>
    <dbReference type="NCBI Taxonomy" id="330879"/>
    <lineage>
        <taxon>Eukaryota</taxon>
        <taxon>Fungi</taxon>
        <taxon>Dikarya</taxon>
        <taxon>Ascomycota</taxon>
        <taxon>Pezizomycotina</taxon>
        <taxon>Eurotiomycetes</taxon>
        <taxon>Eurotiomycetidae</taxon>
        <taxon>Eurotiales</taxon>
        <taxon>Aspergillaceae</taxon>
        <taxon>Aspergillus</taxon>
        <taxon>Aspergillus subgen. Fumigati</taxon>
    </lineage>
</organism>
<gene>
    <name evidence="3" type="primary">ctrA2</name>
    <name type="ORF">AFUA_6G02810</name>
</gene>
<comment type="function">
    <text evidence="2 5">High-affinity copper transporter of plasma membrane that mediates copper uptake under low copper conditions (PubMed:25281782). The mechanism driving the transmembrane transport of copper has still to be determined (Probable). Acts as a potential virulence factor (PubMed:25281782).</text>
</comment>
<comment type="catalytic activity">
    <reaction evidence="2">
        <text>Cu(2+)(in) = Cu(2+)(out)</text>
        <dbReference type="Rhea" id="RHEA:28703"/>
        <dbReference type="ChEBI" id="CHEBI:29036"/>
    </reaction>
    <physiologicalReaction direction="right-to-left" evidence="2">
        <dbReference type="Rhea" id="RHEA:28705"/>
    </physiologicalReaction>
</comment>
<comment type="subcellular location">
    <subcellularLocation>
        <location evidence="1">Cell membrane</location>
        <topology evidence="1">Multi-pass membrane protein</topology>
    </subcellularLocation>
</comment>
<comment type="induction">
    <text evidence="2">Expression is up-regulated by copper deficiency and decreased dramatically when the copper concentration increases (PubMed:25281782). Expression is up-regulated by the deletion of ctrC (PubMed:25281782).</text>
</comment>
<comment type="disruption phenotype">
    <text evidence="2">Exhibits a reduced copper content and leads to cell decolorization due to lower laccase activity, when ctrC is also deleted.</text>
</comment>
<comment type="similarity">
    <text evidence="4">Belongs to the copper transporter (Ctr) (TC 1.A.56) family. SLC31A subfamily.</text>
</comment>
<name>CTRA2_ASPFU</name>
<keyword id="KW-1003">Cell membrane</keyword>
<keyword id="KW-0186">Copper</keyword>
<keyword id="KW-0187">Copper transport</keyword>
<keyword id="KW-0406">Ion transport</keyword>
<keyword id="KW-0472">Membrane</keyword>
<keyword id="KW-1185">Reference proteome</keyword>
<keyword id="KW-0812">Transmembrane</keyword>
<keyword id="KW-1133">Transmembrane helix</keyword>
<keyword id="KW-0813">Transport</keyword>
<proteinExistence type="evidence at transcript level"/>
<accession>Q4WCY0</accession>